<proteinExistence type="inferred from homology"/>
<keyword id="KW-0963">Cytoplasm</keyword>
<keyword id="KW-0413">Isomerase</keyword>
<keyword id="KW-1185">Reference proteome</keyword>
<keyword id="KW-0677">Repeat</keyword>
<keyword id="KW-0697">Rotamase</keyword>
<keyword id="KW-0802">TPR repeat</keyword>
<feature type="chain" id="PRO_0000232946" description="Peptidyl-prolyl cis-trans isomerase D">
    <location>
        <begin position="1"/>
        <end position="375"/>
    </location>
</feature>
<feature type="domain" description="PPIase cyclophilin-type" evidence="2">
    <location>
        <begin position="7"/>
        <end position="169"/>
    </location>
</feature>
<feature type="repeat" description="TPR 1">
    <location>
        <begin position="217"/>
        <end position="250"/>
    </location>
</feature>
<feature type="repeat" description="TPR 2">
    <location>
        <begin position="270"/>
        <end position="307"/>
    </location>
</feature>
<feature type="repeat" description="TPR 3">
    <location>
        <begin position="312"/>
        <end position="345"/>
    </location>
</feature>
<comment type="function">
    <text evidence="1">PPIases accelerate the folding of proteins. It catalyzes the cis-trans isomerization of proline imidic peptide bonds in oligopeptides (By similarity).</text>
</comment>
<comment type="catalytic activity">
    <reaction>
        <text>[protein]-peptidylproline (omega=180) = [protein]-peptidylproline (omega=0)</text>
        <dbReference type="Rhea" id="RHEA:16237"/>
        <dbReference type="Rhea" id="RHEA-COMP:10747"/>
        <dbReference type="Rhea" id="RHEA-COMP:10748"/>
        <dbReference type="ChEBI" id="CHEBI:83833"/>
        <dbReference type="ChEBI" id="CHEBI:83834"/>
        <dbReference type="EC" id="5.2.1.8"/>
    </reaction>
</comment>
<comment type="subcellular location">
    <subcellularLocation>
        <location evidence="1">Cytoplasm</location>
    </subcellularLocation>
</comment>
<comment type="similarity">
    <text evidence="3">Belongs to the cyclophilin-type PPIase family. PPIase D subfamily.</text>
</comment>
<sequence>MSNTIAYFDITIANEPAGRLTFELFDDVVPKTANNFKHLCIGDKTNEAGVKLAYAGSSFHRCIKGFMLQGGDFTRGDGTGGESIYGEKFEDENFELKHDKPMLLSMANAGPGTNGSQFFITTVPTPHLDGKHVVFGRVIYNRSLVRRIENIPTTSDRPDQAVTISSAGVLSPDEFAQLEAERQAKQAGSDGGDIWEDWPQDEEGVDAEKPEEALVVAGKLKEVGTKEFKAGNFAVALDKYQKALRYLDVHPVLPNDSPAELVESFRSLRLPLLTNAALCALKLPASPNTSSLVVSLTSRALTLPNLSASEKGKALYRRAQAYVLKKDDEAAEKDLKGALECVPGDAGVIKLLKDVEAKRKARREKERQAFAKMFG</sequence>
<reference key="1">
    <citation type="journal article" date="2005" name="Science">
        <title>The genome of the basidiomycetous yeast and human pathogen Cryptococcus neoformans.</title>
        <authorList>
            <person name="Loftus B.J."/>
            <person name="Fung E."/>
            <person name="Roncaglia P."/>
            <person name="Rowley D."/>
            <person name="Amedeo P."/>
            <person name="Bruno D."/>
            <person name="Vamathevan J."/>
            <person name="Miranda M."/>
            <person name="Anderson I.J."/>
            <person name="Fraser J.A."/>
            <person name="Allen J.E."/>
            <person name="Bosdet I.E."/>
            <person name="Brent M.R."/>
            <person name="Chiu R."/>
            <person name="Doering T.L."/>
            <person name="Donlin M.J."/>
            <person name="D'Souza C.A."/>
            <person name="Fox D.S."/>
            <person name="Grinberg V."/>
            <person name="Fu J."/>
            <person name="Fukushima M."/>
            <person name="Haas B.J."/>
            <person name="Huang J.C."/>
            <person name="Janbon G."/>
            <person name="Jones S.J.M."/>
            <person name="Koo H.L."/>
            <person name="Krzywinski M.I."/>
            <person name="Kwon-Chung K.J."/>
            <person name="Lengeler K.B."/>
            <person name="Maiti R."/>
            <person name="Marra M.A."/>
            <person name="Marra R.E."/>
            <person name="Mathewson C.A."/>
            <person name="Mitchell T.G."/>
            <person name="Pertea M."/>
            <person name="Riggs F.R."/>
            <person name="Salzberg S.L."/>
            <person name="Schein J.E."/>
            <person name="Shvartsbeyn A."/>
            <person name="Shin H."/>
            <person name="Shumway M."/>
            <person name="Specht C.A."/>
            <person name="Suh B.B."/>
            <person name="Tenney A."/>
            <person name="Utterback T.R."/>
            <person name="Wickes B.L."/>
            <person name="Wortman J.R."/>
            <person name="Wye N.H."/>
            <person name="Kronstad J.W."/>
            <person name="Lodge J.K."/>
            <person name="Heitman J."/>
            <person name="Davis R.W."/>
            <person name="Fraser C.M."/>
            <person name="Hyman R.W."/>
        </authorList>
    </citation>
    <scope>NUCLEOTIDE SEQUENCE [LARGE SCALE GENOMIC DNA]</scope>
    <source>
        <strain>JEC21 / ATCC MYA-565</strain>
    </source>
</reference>
<gene>
    <name type="primary">CPR6</name>
    <name type="ordered locus">CNF00430</name>
</gene>
<dbReference type="EC" id="5.2.1.8"/>
<dbReference type="EMBL" id="AE017346">
    <property type="protein sequence ID" value="AAW44171.1"/>
    <property type="molecule type" value="Genomic_DNA"/>
</dbReference>
<dbReference type="RefSeq" id="XP_571478.1">
    <property type="nucleotide sequence ID" value="XM_571478.1"/>
</dbReference>
<dbReference type="SMR" id="P0CP80"/>
<dbReference type="FunCoup" id="P0CP80">
    <property type="interactions" value="574"/>
</dbReference>
<dbReference type="STRING" id="214684.P0CP80"/>
<dbReference type="PaxDb" id="214684-P0CP80"/>
<dbReference type="EnsemblFungi" id="AAW44171">
    <property type="protein sequence ID" value="AAW44171"/>
    <property type="gene ID" value="CNF00430"/>
</dbReference>
<dbReference type="GeneID" id="3258143"/>
<dbReference type="KEGG" id="cne:CNF00430"/>
<dbReference type="VEuPathDB" id="FungiDB:CNF00430"/>
<dbReference type="eggNOG" id="KOG0546">
    <property type="taxonomic scope" value="Eukaryota"/>
</dbReference>
<dbReference type="HOGENOM" id="CLU_012062_37_0_1"/>
<dbReference type="InParanoid" id="P0CP80"/>
<dbReference type="OMA" id="EMEQNCN"/>
<dbReference type="OrthoDB" id="193499at2759"/>
<dbReference type="Proteomes" id="UP000002149">
    <property type="component" value="Chromosome 6"/>
</dbReference>
<dbReference type="GO" id="GO:0005737">
    <property type="term" value="C:cytoplasm"/>
    <property type="evidence" value="ECO:0000318"/>
    <property type="project" value="GO_Central"/>
</dbReference>
<dbReference type="GO" id="GO:0043231">
    <property type="term" value="C:intracellular membrane-bounded organelle"/>
    <property type="evidence" value="ECO:0000318"/>
    <property type="project" value="GO_Central"/>
</dbReference>
<dbReference type="GO" id="GO:0016018">
    <property type="term" value="F:cyclosporin A binding"/>
    <property type="evidence" value="ECO:0000318"/>
    <property type="project" value="GO_Central"/>
</dbReference>
<dbReference type="GO" id="GO:0003755">
    <property type="term" value="F:peptidyl-prolyl cis-trans isomerase activity"/>
    <property type="evidence" value="ECO:0000318"/>
    <property type="project" value="GO_Central"/>
</dbReference>
<dbReference type="GO" id="GO:0006457">
    <property type="term" value="P:protein folding"/>
    <property type="evidence" value="ECO:0000318"/>
    <property type="project" value="GO_Central"/>
</dbReference>
<dbReference type="CDD" id="cd01926">
    <property type="entry name" value="cyclophilin_ABH_like"/>
    <property type="match status" value="1"/>
</dbReference>
<dbReference type="FunFam" id="2.40.100.10:FF:000068">
    <property type="entry name" value="Peptidyl-prolyl cis-trans isomerase D"/>
    <property type="match status" value="1"/>
</dbReference>
<dbReference type="FunFam" id="1.25.40.10:FF:000029">
    <property type="entry name" value="peptidyl-prolyl cis-trans isomerase D"/>
    <property type="match status" value="1"/>
</dbReference>
<dbReference type="Gene3D" id="2.40.100.10">
    <property type="entry name" value="Cyclophilin-like"/>
    <property type="match status" value="1"/>
</dbReference>
<dbReference type="Gene3D" id="1.25.40.10">
    <property type="entry name" value="Tetratricopeptide repeat domain"/>
    <property type="match status" value="1"/>
</dbReference>
<dbReference type="InterPro" id="IPR029000">
    <property type="entry name" value="Cyclophilin-like_dom_sf"/>
</dbReference>
<dbReference type="InterPro" id="IPR002130">
    <property type="entry name" value="Cyclophilin-type_PPIase_dom"/>
</dbReference>
<dbReference type="InterPro" id="IPR011990">
    <property type="entry name" value="TPR-like_helical_dom_sf"/>
</dbReference>
<dbReference type="PANTHER" id="PTHR11071">
    <property type="entry name" value="PEPTIDYL-PROLYL CIS-TRANS ISOMERASE"/>
    <property type="match status" value="1"/>
</dbReference>
<dbReference type="PANTHER" id="PTHR11071:SF561">
    <property type="entry name" value="PEPTIDYL-PROLYL CIS-TRANS ISOMERASE D-RELATED"/>
    <property type="match status" value="1"/>
</dbReference>
<dbReference type="Pfam" id="PF00160">
    <property type="entry name" value="Pro_isomerase"/>
    <property type="match status" value="1"/>
</dbReference>
<dbReference type="PRINTS" id="PR00153">
    <property type="entry name" value="CSAPPISMRASE"/>
</dbReference>
<dbReference type="SUPFAM" id="SSF50891">
    <property type="entry name" value="Cyclophilin-like"/>
    <property type="match status" value="1"/>
</dbReference>
<dbReference type="SUPFAM" id="SSF48452">
    <property type="entry name" value="TPR-like"/>
    <property type="match status" value="1"/>
</dbReference>
<dbReference type="PROSITE" id="PS50072">
    <property type="entry name" value="CSA_PPIASE_2"/>
    <property type="match status" value="1"/>
</dbReference>
<accession>P0CP80</accession>
<accession>Q55QB1</accession>
<accession>Q5KFV5</accession>
<name>PPID_CRYNJ</name>
<protein>
    <recommendedName>
        <fullName>Peptidyl-prolyl cis-trans isomerase D</fullName>
        <shortName>PPIase D</shortName>
        <ecNumber>5.2.1.8</ecNumber>
    </recommendedName>
    <alternativeName>
        <fullName>Rotamase D</fullName>
    </alternativeName>
</protein>
<evidence type="ECO:0000250" key="1"/>
<evidence type="ECO:0000255" key="2">
    <source>
        <dbReference type="PROSITE-ProRule" id="PRU00156"/>
    </source>
</evidence>
<evidence type="ECO:0000305" key="3"/>
<organism>
    <name type="scientific">Cryptococcus neoformans var. neoformans serotype D (strain JEC21 / ATCC MYA-565)</name>
    <name type="common">Filobasidiella neoformans</name>
    <dbReference type="NCBI Taxonomy" id="214684"/>
    <lineage>
        <taxon>Eukaryota</taxon>
        <taxon>Fungi</taxon>
        <taxon>Dikarya</taxon>
        <taxon>Basidiomycota</taxon>
        <taxon>Agaricomycotina</taxon>
        <taxon>Tremellomycetes</taxon>
        <taxon>Tremellales</taxon>
        <taxon>Cryptococcaceae</taxon>
        <taxon>Cryptococcus</taxon>
        <taxon>Cryptococcus neoformans species complex</taxon>
    </lineage>
</organism>